<accession>Q96SK2</accession>
<accession>A4D1L1</accession>
<accession>Q49A50</accession>
<accession>Q6PF00</accession>
<accession>Q8NCH3</accession>
<accession>Q96SL6</accession>
<reference key="1">
    <citation type="journal article" date="2004" name="Nat. Genet.">
        <title>Complete sequencing and characterization of 21,243 full-length human cDNAs.</title>
        <authorList>
            <person name="Ota T."/>
            <person name="Suzuki Y."/>
            <person name="Nishikawa T."/>
            <person name="Otsuki T."/>
            <person name="Sugiyama T."/>
            <person name="Irie R."/>
            <person name="Wakamatsu A."/>
            <person name="Hayashi K."/>
            <person name="Sato H."/>
            <person name="Nagai K."/>
            <person name="Kimura K."/>
            <person name="Makita H."/>
            <person name="Sekine M."/>
            <person name="Obayashi M."/>
            <person name="Nishi T."/>
            <person name="Shibahara T."/>
            <person name="Tanaka T."/>
            <person name="Ishii S."/>
            <person name="Yamamoto J."/>
            <person name="Saito K."/>
            <person name="Kawai Y."/>
            <person name="Isono Y."/>
            <person name="Nakamura Y."/>
            <person name="Nagahari K."/>
            <person name="Murakami K."/>
            <person name="Yasuda T."/>
            <person name="Iwayanagi T."/>
            <person name="Wagatsuma M."/>
            <person name="Shiratori A."/>
            <person name="Sudo H."/>
            <person name="Hosoiri T."/>
            <person name="Kaku Y."/>
            <person name="Kodaira H."/>
            <person name="Kondo H."/>
            <person name="Sugawara M."/>
            <person name="Takahashi M."/>
            <person name="Kanda K."/>
            <person name="Yokoi T."/>
            <person name="Furuya T."/>
            <person name="Kikkawa E."/>
            <person name="Omura Y."/>
            <person name="Abe K."/>
            <person name="Kamihara K."/>
            <person name="Katsuta N."/>
            <person name="Sato K."/>
            <person name="Tanikawa M."/>
            <person name="Yamazaki M."/>
            <person name="Ninomiya K."/>
            <person name="Ishibashi T."/>
            <person name="Yamashita H."/>
            <person name="Murakawa K."/>
            <person name="Fujimori K."/>
            <person name="Tanai H."/>
            <person name="Kimata M."/>
            <person name="Watanabe M."/>
            <person name="Hiraoka S."/>
            <person name="Chiba Y."/>
            <person name="Ishida S."/>
            <person name="Ono Y."/>
            <person name="Takiguchi S."/>
            <person name="Watanabe S."/>
            <person name="Yosida M."/>
            <person name="Hotuta T."/>
            <person name="Kusano J."/>
            <person name="Kanehori K."/>
            <person name="Takahashi-Fujii A."/>
            <person name="Hara H."/>
            <person name="Tanase T.-O."/>
            <person name="Nomura Y."/>
            <person name="Togiya S."/>
            <person name="Komai F."/>
            <person name="Hara R."/>
            <person name="Takeuchi K."/>
            <person name="Arita M."/>
            <person name="Imose N."/>
            <person name="Musashino K."/>
            <person name="Yuuki H."/>
            <person name="Oshima A."/>
            <person name="Sasaki N."/>
            <person name="Aotsuka S."/>
            <person name="Yoshikawa Y."/>
            <person name="Matsunawa H."/>
            <person name="Ichihara T."/>
            <person name="Shiohata N."/>
            <person name="Sano S."/>
            <person name="Moriya S."/>
            <person name="Momiyama H."/>
            <person name="Satoh N."/>
            <person name="Takami S."/>
            <person name="Terashima Y."/>
            <person name="Suzuki O."/>
            <person name="Nakagawa S."/>
            <person name="Senoh A."/>
            <person name="Mizoguchi H."/>
            <person name="Goto Y."/>
            <person name="Shimizu F."/>
            <person name="Wakebe H."/>
            <person name="Hishigaki H."/>
            <person name="Watanabe T."/>
            <person name="Sugiyama A."/>
            <person name="Takemoto M."/>
            <person name="Kawakami B."/>
            <person name="Yamazaki M."/>
            <person name="Watanabe K."/>
            <person name="Kumagai A."/>
            <person name="Itakura S."/>
            <person name="Fukuzumi Y."/>
            <person name="Fujimori Y."/>
            <person name="Komiyama M."/>
            <person name="Tashiro H."/>
            <person name="Tanigami A."/>
            <person name="Fujiwara T."/>
            <person name="Ono T."/>
            <person name="Yamada K."/>
            <person name="Fujii Y."/>
            <person name="Ozaki K."/>
            <person name="Hirao M."/>
            <person name="Ohmori Y."/>
            <person name="Kawabata A."/>
            <person name="Hikiji T."/>
            <person name="Kobatake N."/>
            <person name="Inagaki H."/>
            <person name="Ikema Y."/>
            <person name="Okamoto S."/>
            <person name="Okitani R."/>
            <person name="Kawakami T."/>
            <person name="Noguchi S."/>
            <person name="Itoh T."/>
            <person name="Shigeta K."/>
            <person name="Senba T."/>
            <person name="Matsumura K."/>
            <person name="Nakajima Y."/>
            <person name="Mizuno T."/>
            <person name="Morinaga M."/>
            <person name="Sasaki M."/>
            <person name="Togashi T."/>
            <person name="Oyama M."/>
            <person name="Hata H."/>
            <person name="Watanabe M."/>
            <person name="Komatsu T."/>
            <person name="Mizushima-Sugano J."/>
            <person name="Satoh T."/>
            <person name="Shirai Y."/>
            <person name="Takahashi Y."/>
            <person name="Nakagawa K."/>
            <person name="Okumura K."/>
            <person name="Nagase T."/>
            <person name="Nomura N."/>
            <person name="Kikuchi H."/>
            <person name="Masuho Y."/>
            <person name="Yamashita R."/>
            <person name="Nakai K."/>
            <person name="Yada T."/>
            <person name="Nakamura Y."/>
            <person name="Ohara O."/>
            <person name="Isogai T."/>
            <person name="Sugano S."/>
        </authorList>
    </citation>
    <scope>NUCLEOTIDE SEQUENCE [LARGE SCALE MRNA] (ISOFORMS 1 AND 4)</scope>
    <source>
        <tissue>Teratocarcinoma</tissue>
    </source>
</reference>
<reference key="2">
    <citation type="journal article" date="2003" name="Nature">
        <title>The DNA sequence of human chromosome 7.</title>
        <authorList>
            <person name="Hillier L.W."/>
            <person name="Fulton R.S."/>
            <person name="Fulton L.A."/>
            <person name="Graves T.A."/>
            <person name="Pepin K.H."/>
            <person name="Wagner-McPherson C."/>
            <person name="Layman D."/>
            <person name="Maas J."/>
            <person name="Jaeger S."/>
            <person name="Walker R."/>
            <person name="Wylie K."/>
            <person name="Sekhon M."/>
            <person name="Becker M.C."/>
            <person name="O'Laughlin M.D."/>
            <person name="Schaller M.E."/>
            <person name="Fewell G.A."/>
            <person name="Delehaunty K.D."/>
            <person name="Miner T.L."/>
            <person name="Nash W.E."/>
            <person name="Cordes M."/>
            <person name="Du H."/>
            <person name="Sun H."/>
            <person name="Edwards J."/>
            <person name="Bradshaw-Cordum H."/>
            <person name="Ali J."/>
            <person name="Andrews S."/>
            <person name="Isak A."/>
            <person name="Vanbrunt A."/>
            <person name="Nguyen C."/>
            <person name="Du F."/>
            <person name="Lamar B."/>
            <person name="Courtney L."/>
            <person name="Kalicki J."/>
            <person name="Ozersky P."/>
            <person name="Bielicki L."/>
            <person name="Scott K."/>
            <person name="Holmes A."/>
            <person name="Harkins R."/>
            <person name="Harris A."/>
            <person name="Strong C.M."/>
            <person name="Hou S."/>
            <person name="Tomlinson C."/>
            <person name="Dauphin-Kohlberg S."/>
            <person name="Kozlowicz-Reilly A."/>
            <person name="Leonard S."/>
            <person name="Rohlfing T."/>
            <person name="Rock S.M."/>
            <person name="Tin-Wollam A.-M."/>
            <person name="Abbott A."/>
            <person name="Minx P."/>
            <person name="Maupin R."/>
            <person name="Strowmatt C."/>
            <person name="Latreille P."/>
            <person name="Miller N."/>
            <person name="Johnson D."/>
            <person name="Murray J."/>
            <person name="Woessner J.P."/>
            <person name="Wendl M.C."/>
            <person name="Yang S.-P."/>
            <person name="Schultz B.R."/>
            <person name="Wallis J.W."/>
            <person name="Spieth J."/>
            <person name="Bieri T.A."/>
            <person name="Nelson J.O."/>
            <person name="Berkowicz N."/>
            <person name="Wohldmann P.E."/>
            <person name="Cook L.L."/>
            <person name="Hickenbotham M.T."/>
            <person name="Eldred J."/>
            <person name="Williams D."/>
            <person name="Bedell J.A."/>
            <person name="Mardis E.R."/>
            <person name="Clifton S.W."/>
            <person name="Chissoe S.L."/>
            <person name="Marra M.A."/>
            <person name="Raymond C."/>
            <person name="Haugen E."/>
            <person name="Gillett W."/>
            <person name="Zhou Y."/>
            <person name="James R."/>
            <person name="Phelps K."/>
            <person name="Iadanoto S."/>
            <person name="Bubb K."/>
            <person name="Simms E."/>
            <person name="Levy R."/>
            <person name="Clendenning J."/>
            <person name="Kaul R."/>
            <person name="Kent W.J."/>
            <person name="Furey T.S."/>
            <person name="Baertsch R.A."/>
            <person name="Brent M.R."/>
            <person name="Keibler E."/>
            <person name="Flicek P."/>
            <person name="Bork P."/>
            <person name="Suyama M."/>
            <person name="Bailey J.A."/>
            <person name="Portnoy M.E."/>
            <person name="Torrents D."/>
            <person name="Chinwalla A.T."/>
            <person name="Gish W.R."/>
            <person name="Eddy S.R."/>
            <person name="McPherson J.D."/>
            <person name="Olson M.V."/>
            <person name="Eichler E.E."/>
            <person name="Green E.D."/>
            <person name="Waterston R.H."/>
            <person name="Wilson R.K."/>
        </authorList>
    </citation>
    <scope>NUCLEOTIDE SEQUENCE [LARGE SCALE GENOMIC DNA]</scope>
</reference>
<reference key="3">
    <citation type="journal article" date="2003" name="Science">
        <title>Human chromosome 7: DNA sequence and biology.</title>
        <authorList>
            <person name="Scherer S.W."/>
            <person name="Cheung J."/>
            <person name="MacDonald J.R."/>
            <person name="Osborne L.R."/>
            <person name="Nakabayashi K."/>
            <person name="Herbrick J.-A."/>
            <person name="Carson A.R."/>
            <person name="Parker-Katiraee L."/>
            <person name="Skaug J."/>
            <person name="Khaja R."/>
            <person name="Zhang J."/>
            <person name="Hudek A.K."/>
            <person name="Li M."/>
            <person name="Haddad M."/>
            <person name="Duggan G.E."/>
            <person name="Fernandez B.A."/>
            <person name="Kanematsu E."/>
            <person name="Gentles S."/>
            <person name="Christopoulos C.C."/>
            <person name="Choufani S."/>
            <person name="Kwasnicka D."/>
            <person name="Zheng X.H."/>
            <person name="Lai Z."/>
            <person name="Nusskern D.R."/>
            <person name="Zhang Q."/>
            <person name="Gu Z."/>
            <person name="Lu F."/>
            <person name="Zeesman S."/>
            <person name="Nowaczyk M.J."/>
            <person name="Teshima I."/>
            <person name="Chitayat D."/>
            <person name="Shuman C."/>
            <person name="Weksberg R."/>
            <person name="Zackai E.H."/>
            <person name="Grebe T.A."/>
            <person name="Cox S.R."/>
            <person name="Kirkpatrick S.J."/>
            <person name="Rahman N."/>
            <person name="Friedman J.M."/>
            <person name="Heng H.H.Q."/>
            <person name="Pelicci P.G."/>
            <person name="Lo-Coco F."/>
            <person name="Belloni E."/>
            <person name="Shaffer L.G."/>
            <person name="Pober B."/>
            <person name="Morton C.C."/>
            <person name="Gusella J.F."/>
            <person name="Bruns G.A.P."/>
            <person name="Korf B.R."/>
            <person name="Quade B.J."/>
            <person name="Ligon A.H."/>
            <person name="Ferguson H."/>
            <person name="Higgins A.W."/>
            <person name="Leach N.T."/>
            <person name="Herrick S.R."/>
            <person name="Lemyre E."/>
            <person name="Farra C.G."/>
            <person name="Kim H.-G."/>
            <person name="Summers A.M."/>
            <person name="Gripp K.W."/>
            <person name="Roberts W."/>
            <person name="Szatmari P."/>
            <person name="Winsor E.J.T."/>
            <person name="Grzeschik K.-H."/>
            <person name="Teebi A."/>
            <person name="Minassian B.A."/>
            <person name="Kere J."/>
            <person name="Armengol L."/>
            <person name="Pujana M.A."/>
            <person name="Estivill X."/>
            <person name="Wilson M.D."/>
            <person name="Koop B.F."/>
            <person name="Tosi S."/>
            <person name="Moore G.E."/>
            <person name="Boright A.P."/>
            <person name="Zlotorynski E."/>
            <person name="Kerem B."/>
            <person name="Kroisel P.M."/>
            <person name="Petek E."/>
            <person name="Oscier D.G."/>
            <person name="Mould S.J."/>
            <person name="Doehner H."/>
            <person name="Doehner K."/>
            <person name="Rommens J.M."/>
            <person name="Vincent J.B."/>
            <person name="Venter J.C."/>
            <person name="Li P.W."/>
            <person name="Mural R.J."/>
            <person name="Adams M.D."/>
            <person name="Tsui L.-C."/>
        </authorList>
    </citation>
    <scope>NUCLEOTIDE SEQUENCE [LARGE SCALE GENOMIC DNA]</scope>
</reference>
<reference key="4">
    <citation type="submission" date="2005-07" db="EMBL/GenBank/DDBJ databases">
        <authorList>
            <person name="Mural R.J."/>
            <person name="Istrail S."/>
            <person name="Sutton G.G."/>
            <person name="Florea L."/>
            <person name="Halpern A.L."/>
            <person name="Mobarry C.M."/>
            <person name="Lippert R."/>
            <person name="Walenz B."/>
            <person name="Shatkay H."/>
            <person name="Dew I."/>
            <person name="Miller J.R."/>
            <person name="Flanigan M.J."/>
            <person name="Edwards N.J."/>
            <person name="Bolanos R."/>
            <person name="Fasulo D."/>
            <person name="Halldorsson B.V."/>
            <person name="Hannenhalli S."/>
            <person name="Turner R."/>
            <person name="Yooseph S."/>
            <person name="Lu F."/>
            <person name="Nusskern D.R."/>
            <person name="Shue B.C."/>
            <person name="Zheng X.H."/>
            <person name="Zhong F."/>
            <person name="Delcher A.L."/>
            <person name="Huson D.H."/>
            <person name="Kravitz S.A."/>
            <person name="Mouchard L."/>
            <person name="Reinert K."/>
            <person name="Remington K.A."/>
            <person name="Clark A.G."/>
            <person name="Waterman M.S."/>
            <person name="Eichler E.E."/>
            <person name="Adams M.D."/>
            <person name="Hunkapiller M.W."/>
            <person name="Myers E.W."/>
            <person name="Venter J.C."/>
        </authorList>
    </citation>
    <scope>NUCLEOTIDE SEQUENCE [LARGE SCALE GENOMIC DNA]</scope>
</reference>
<reference key="5">
    <citation type="journal article" date="2004" name="Genome Res.">
        <title>The status, quality, and expansion of the NIH full-length cDNA project: the Mammalian Gene Collection (MGC).</title>
        <authorList>
            <consortium name="The MGC Project Team"/>
        </authorList>
    </citation>
    <scope>NUCLEOTIDE SEQUENCE [LARGE SCALE MRNA] (ISOFORMS 1 AND 3)</scope>
    <scope>VARIANTS ARG-469 AND ARG-505</scope>
    <source>
        <tissue>Brain</tissue>
        <tissue>Testis</tissue>
    </source>
</reference>
<reference key="6">
    <citation type="journal article" date="2008" name="Mol. Cell">
        <title>Kinase-selective enrichment enables quantitative phosphoproteomics of the kinome across the cell cycle.</title>
        <authorList>
            <person name="Daub H."/>
            <person name="Olsen J.V."/>
            <person name="Bairlein M."/>
            <person name="Gnad F."/>
            <person name="Oppermann F.S."/>
            <person name="Korner R."/>
            <person name="Greff Z."/>
            <person name="Keri G."/>
            <person name="Stemmann O."/>
            <person name="Mann M."/>
        </authorList>
    </citation>
    <scope>PHOSPHORYLATION [LARGE SCALE ANALYSIS] AT SER-98 AND SER-248</scope>
    <scope>IDENTIFICATION BY MASS SPECTROMETRY [LARGE SCALE ANALYSIS]</scope>
    <source>
        <tissue>Cervix carcinoma</tissue>
    </source>
</reference>
<reference key="7">
    <citation type="journal article" date="2008" name="Proc. Natl. Acad. Sci. U.S.A.">
        <title>A quantitative atlas of mitotic phosphorylation.</title>
        <authorList>
            <person name="Dephoure N."/>
            <person name="Zhou C."/>
            <person name="Villen J."/>
            <person name="Beausoleil S.A."/>
            <person name="Bakalarski C.E."/>
            <person name="Elledge S.J."/>
            <person name="Gygi S.P."/>
        </authorList>
    </citation>
    <scope>PHOSPHORYLATION [LARGE SCALE ANALYSIS] AT SER-222</scope>
    <scope>IDENTIFICATION BY MASS SPECTROMETRY [LARGE SCALE ANALYSIS]</scope>
    <source>
        <tissue>Cervix carcinoma</tissue>
    </source>
</reference>
<reference key="8">
    <citation type="journal article" date="2010" name="Sci. Signal.">
        <title>Quantitative phosphoproteomics reveals widespread full phosphorylation site occupancy during mitosis.</title>
        <authorList>
            <person name="Olsen J.V."/>
            <person name="Vermeulen M."/>
            <person name="Santamaria A."/>
            <person name="Kumar C."/>
            <person name="Miller M.L."/>
            <person name="Jensen L.J."/>
            <person name="Gnad F."/>
            <person name="Cox J."/>
            <person name="Jensen T.S."/>
            <person name="Nigg E.A."/>
            <person name="Brunak S."/>
            <person name="Mann M."/>
        </authorList>
    </citation>
    <scope>PHOSPHORYLATION [LARGE SCALE ANALYSIS] AT SER-98 AND SER-248</scope>
    <scope>IDENTIFICATION BY MASS SPECTROMETRY [LARGE SCALE ANALYSIS]</scope>
    <source>
        <tissue>Cervix carcinoma</tissue>
    </source>
</reference>
<reference key="9">
    <citation type="journal article" date="2012" name="Cancer Res.">
        <title>Critical function for nuclear envelope protein TMEM209 in human pulmonary carcinogenesis.</title>
        <authorList>
            <person name="Fujitomo T."/>
            <person name="Daigo Y."/>
            <person name="Matsuda K."/>
            <person name="Ueda K."/>
            <person name="Nakamura Y."/>
        </authorList>
    </citation>
    <scope>FUNCTION</scope>
    <scope>SUBCELLULAR LOCATION</scope>
    <scope>TISSUE SPECIFICITY</scope>
    <scope>INTERACTION WITH NUP205</scope>
</reference>
<reference key="10">
    <citation type="journal article" date="2013" name="J. Proteome Res.">
        <title>Toward a comprehensive characterization of a human cancer cell phosphoproteome.</title>
        <authorList>
            <person name="Zhou H."/>
            <person name="Di Palma S."/>
            <person name="Preisinger C."/>
            <person name="Peng M."/>
            <person name="Polat A.N."/>
            <person name="Heck A.J."/>
            <person name="Mohammed S."/>
        </authorList>
    </citation>
    <scope>PHOSPHORYLATION [LARGE SCALE ANALYSIS] AT SER-9; SER-11; SER-201; SER-248 AND SER-278</scope>
    <scope>IDENTIFICATION BY MASS SPECTROMETRY [LARGE SCALE ANALYSIS]</scope>
    <source>
        <tissue>Cervix carcinoma</tissue>
        <tissue>Erythroleukemia</tissue>
    </source>
</reference>
<evidence type="ECO:0000255" key="1"/>
<evidence type="ECO:0000256" key="2">
    <source>
        <dbReference type="SAM" id="MobiDB-lite"/>
    </source>
</evidence>
<evidence type="ECO:0000269" key="3">
    <source>
    </source>
</evidence>
<evidence type="ECO:0000269" key="4">
    <source>
    </source>
</evidence>
<evidence type="ECO:0000303" key="5">
    <source>
    </source>
</evidence>
<evidence type="ECO:0000303" key="6">
    <source>
    </source>
</evidence>
<evidence type="ECO:0000305" key="7"/>
<evidence type="ECO:0007744" key="8">
    <source>
    </source>
</evidence>
<evidence type="ECO:0007744" key="9">
    <source>
    </source>
</evidence>
<evidence type="ECO:0007744" key="10">
    <source>
    </source>
</evidence>
<evidence type="ECO:0007744" key="11">
    <source>
    </source>
</evidence>
<name>TM209_HUMAN</name>
<protein>
    <recommendedName>
        <fullName>Transmembrane protein 209</fullName>
    </recommendedName>
</protein>
<proteinExistence type="evidence at protein level"/>
<dbReference type="EMBL" id="AK027678">
    <property type="protein sequence ID" value="BAB55289.1"/>
    <property type="molecule type" value="mRNA"/>
</dbReference>
<dbReference type="EMBL" id="AK027709">
    <property type="protein sequence ID" value="BAB55314.1"/>
    <property type="molecule type" value="mRNA"/>
</dbReference>
<dbReference type="EMBL" id="AK074732">
    <property type="protein sequence ID" value="BAC11168.1"/>
    <property type="molecule type" value="mRNA"/>
</dbReference>
<dbReference type="EMBL" id="CH236950">
    <property type="protein sequence ID" value="EAL24094.1"/>
    <property type="molecule type" value="Genomic_DNA"/>
</dbReference>
<dbReference type="EMBL" id="CH471070">
    <property type="protein sequence ID" value="EAW83748.1"/>
    <property type="molecule type" value="Genomic_DNA"/>
</dbReference>
<dbReference type="EMBL" id="CH471070">
    <property type="protein sequence ID" value="EAW83749.1"/>
    <property type="molecule type" value="Genomic_DNA"/>
</dbReference>
<dbReference type="EMBL" id="BC045618">
    <property type="protein sequence ID" value="AAH45618.1"/>
    <property type="molecule type" value="mRNA"/>
</dbReference>
<dbReference type="EMBL" id="BC057784">
    <property type="protein sequence ID" value="AAH57784.1"/>
    <property type="molecule type" value="mRNA"/>
</dbReference>
<dbReference type="CCDS" id="CCDS47712.1">
    <molecule id="Q96SK2-1"/>
</dbReference>
<dbReference type="CCDS" id="CCDS75661.1">
    <molecule id="Q96SK2-3"/>
</dbReference>
<dbReference type="CCDS" id="CCDS87547.1">
    <molecule id="Q96SK2-2"/>
</dbReference>
<dbReference type="RefSeq" id="NP_001288092.1">
    <molecule id="Q96SK2-3"/>
    <property type="nucleotide sequence ID" value="NM_001301163.2"/>
</dbReference>
<dbReference type="RefSeq" id="NP_001350407.1">
    <molecule id="Q96SK2-2"/>
    <property type="nucleotide sequence ID" value="NM_001363478.2"/>
</dbReference>
<dbReference type="RefSeq" id="NP_116231.2">
    <molecule id="Q96SK2-1"/>
    <property type="nucleotide sequence ID" value="NM_032842.4"/>
</dbReference>
<dbReference type="RefSeq" id="XP_005250712.1">
    <property type="nucleotide sequence ID" value="XM_005250655.1"/>
</dbReference>
<dbReference type="RefSeq" id="XP_011514948.1">
    <property type="nucleotide sequence ID" value="XM_011516646.2"/>
</dbReference>
<dbReference type="BioGRID" id="124362">
    <property type="interactions" value="236"/>
</dbReference>
<dbReference type="FunCoup" id="Q96SK2">
    <property type="interactions" value="987"/>
</dbReference>
<dbReference type="IntAct" id="Q96SK2">
    <property type="interactions" value="64"/>
</dbReference>
<dbReference type="MINT" id="Q96SK2"/>
<dbReference type="STRING" id="9606.ENSP00000380747"/>
<dbReference type="GlyCosmos" id="Q96SK2">
    <property type="glycosylation" value="2 sites, No reported glycans"/>
</dbReference>
<dbReference type="GlyGen" id="Q96SK2">
    <property type="glycosylation" value="3 sites, 1 O-linked glycan (1 site)"/>
</dbReference>
<dbReference type="iPTMnet" id="Q96SK2"/>
<dbReference type="PhosphoSitePlus" id="Q96SK2"/>
<dbReference type="SwissPalm" id="Q96SK2"/>
<dbReference type="BioMuta" id="TMEM209"/>
<dbReference type="DMDM" id="187663981"/>
<dbReference type="jPOST" id="Q96SK2"/>
<dbReference type="MassIVE" id="Q96SK2"/>
<dbReference type="PaxDb" id="9606-ENSP00000380747"/>
<dbReference type="PeptideAtlas" id="Q96SK2"/>
<dbReference type="ProteomicsDB" id="78118">
    <molecule id="Q96SK2-1"/>
</dbReference>
<dbReference type="ProteomicsDB" id="78119">
    <molecule id="Q96SK2-2"/>
</dbReference>
<dbReference type="ProteomicsDB" id="78120">
    <molecule id="Q96SK2-3"/>
</dbReference>
<dbReference type="ProteomicsDB" id="78121">
    <molecule id="Q96SK2-4"/>
</dbReference>
<dbReference type="Pumba" id="Q96SK2"/>
<dbReference type="Antibodypedia" id="32026">
    <property type="antibodies" value="55 antibodies from 19 providers"/>
</dbReference>
<dbReference type="DNASU" id="84928"/>
<dbReference type="Ensembl" id="ENST00000397622.7">
    <molecule id="Q96SK2-1"/>
    <property type="protein sequence ID" value="ENSP00000380747.2"/>
    <property type="gene ID" value="ENSG00000146842.17"/>
</dbReference>
<dbReference type="Ensembl" id="ENST00000462753.5">
    <molecule id="Q96SK2-2"/>
    <property type="protein sequence ID" value="ENSP00000419697.1"/>
    <property type="gene ID" value="ENSG00000146842.17"/>
</dbReference>
<dbReference type="Ensembl" id="ENST00000473456.5">
    <molecule id="Q96SK2-3"/>
    <property type="protein sequence ID" value="ENSP00000417258.1"/>
    <property type="gene ID" value="ENSG00000146842.17"/>
</dbReference>
<dbReference type="GeneID" id="84928"/>
<dbReference type="KEGG" id="hsa:84928"/>
<dbReference type="MANE-Select" id="ENST00000397622.7">
    <property type="protein sequence ID" value="ENSP00000380747.2"/>
    <property type="RefSeq nucleotide sequence ID" value="NM_032842.4"/>
    <property type="RefSeq protein sequence ID" value="NP_116231.2"/>
</dbReference>
<dbReference type="UCSC" id="uc003vpn.2">
    <molecule id="Q96SK2-1"/>
    <property type="organism name" value="human"/>
</dbReference>
<dbReference type="AGR" id="HGNC:21898"/>
<dbReference type="CTD" id="84928"/>
<dbReference type="DisGeNET" id="84928"/>
<dbReference type="GeneCards" id="TMEM209"/>
<dbReference type="HGNC" id="HGNC:21898">
    <property type="gene designation" value="TMEM209"/>
</dbReference>
<dbReference type="HPA" id="ENSG00000146842">
    <property type="expression patterns" value="Low tissue specificity"/>
</dbReference>
<dbReference type="neXtProt" id="NX_Q96SK2"/>
<dbReference type="OpenTargets" id="ENSG00000146842"/>
<dbReference type="PharmGKB" id="PA162406425"/>
<dbReference type="VEuPathDB" id="HostDB:ENSG00000146842"/>
<dbReference type="eggNOG" id="KOG4670">
    <property type="taxonomic scope" value="Eukaryota"/>
</dbReference>
<dbReference type="GeneTree" id="ENSGT00390000013963"/>
<dbReference type="HOGENOM" id="CLU_028470_0_0_1"/>
<dbReference type="InParanoid" id="Q96SK2"/>
<dbReference type="OMA" id="IRGMHLG"/>
<dbReference type="OrthoDB" id="509821at2759"/>
<dbReference type="PAN-GO" id="Q96SK2">
    <property type="GO annotations" value="1 GO annotation based on evolutionary models"/>
</dbReference>
<dbReference type="PhylomeDB" id="Q96SK2"/>
<dbReference type="TreeFam" id="TF320043"/>
<dbReference type="PathwayCommons" id="Q96SK2"/>
<dbReference type="SignaLink" id="Q96SK2"/>
<dbReference type="BioGRID-ORCS" id="84928">
    <property type="hits" value="32 hits in 1161 CRISPR screens"/>
</dbReference>
<dbReference type="ChiTaRS" id="TMEM209">
    <property type="organism name" value="human"/>
</dbReference>
<dbReference type="GenomeRNAi" id="84928"/>
<dbReference type="Pharos" id="Q96SK2">
    <property type="development level" value="Tdark"/>
</dbReference>
<dbReference type="PRO" id="PR:Q96SK2"/>
<dbReference type="Proteomes" id="UP000005640">
    <property type="component" value="Chromosome 7"/>
</dbReference>
<dbReference type="RNAct" id="Q96SK2">
    <property type="molecule type" value="protein"/>
</dbReference>
<dbReference type="Bgee" id="ENSG00000146842">
    <property type="expression patterns" value="Expressed in adrenal tissue and 187 other cell types or tissues"/>
</dbReference>
<dbReference type="ExpressionAtlas" id="Q96SK2">
    <property type="expression patterns" value="baseline and differential"/>
</dbReference>
<dbReference type="GO" id="GO:0005794">
    <property type="term" value="C:Golgi apparatus"/>
    <property type="evidence" value="ECO:0007669"/>
    <property type="project" value="UniProtKB-SubCell"/>
</dbReference>
<dbReference type="GO" id="GO:0016020">
    <property type="term" value="C:membrane"/>
    <property type="evidence" value="ECO:0000318"/>
    <property type="project" value="GO_Central"/>
</dbReference>
<dbReference type="GO" id="GO:0005635">
    <property type="term" value="C:nuclear envelope"/>
    <property type="evidence" value="ECO:0007669"/>
    <property type="project" value="UniProtKB-SubCell"/>
</dbReference>
<dbReference type="InterPro" id="IPR019176">
    <property type="entry name" value="Cytochrome_B561-rel"/>
</dbReference>
<dbReference type="PANTHER" id="PTHR21780">
    <property type="entry name" value="TRANSMEMBRANE PROTEIN 209"/>
    <property type="match status" value="1"/>
</dbReference>
<dbReference type="PANTHER" id="PTHR21780:SF0">
    <property type="entry name" value="TRANSMEMBRANE PROTEIN 209"/>
    <property type="match status" value="1"/>
</dbReference>
<dbReference type="Pfam" id="PF09786">
    <property type="entry name" value="CytochromB561_N"/>
    <property type="match status" value="1"/>
</dbReference>
<feature type="chain" id="PRO_0000331632" description="Transmembrane protein 209">
    <location>
        <begin position="1"/>
        <end position="561"/>
    </location>
</feature>
<feature type="transmembrane region" description="Helical" evidence="1">
    <location>
        <begin position="28"/>
        <end position="48"/>
    </location>
</feature>
<feature type="transmembrane region" description="Helical" evidence="1">
    <location>
        <begin position="60"/>
        <end position="80"/>
    </location>
</feature>
<feature type="region of interest" description="Disordered" evidence="2">
    <location>
        <begin position="119"/>
        <end position="157"/>
    </location>
</feature>
<feature type="region of interest" description="Disordered" evidence="2">
    <location>
        <begin position="195"/>
        <end position="234"/>
    </location>
</feature>
<feature type="region of interest" description="Disordered" evidence="2">
    <location>
        <begin position="250"/>
        <end position="271"/>
    </location>
</feature>
<feature type="compositionally biased region" description="Low complexity" evidence="2">
    <location>
        <begin position="133"/>
        <end position="157"/>
    </location>
</feature>
<feature type="compositionally biased region" description="Polar residues" evidence="2">
    <location>
        <begin position="220"/>
        <end position="229"/>
    </location>
</feature>
<feature type="compositionally biased region" description="Low complexity" evidence="2">
    <location>
        <begin position="260"/>
        <end position="271"/>
    </location>
</feature>
<feature type="modified residue" description="Phosphoserine" evidence="11">
    <location>
        <position position="9"/>
    </location>
</feature>
<feature type="modified residue" description="Phosphoserine" evidence="11">
    <location>
        <position position="11"/>
    </location>
</feature>
<feature type="modified residue" description="Phosphoserine" evidence="9 10">
    <location>
        <position position="98"/>
    </location>
</feature>
<feature type="modified residue" description="Phosphoserine" evidence="11">
    <location>
        <position position="201"/>
    </location>
</feature>
<feature type="modified residue" description="Phosphoserine" evidence="8">
    <location>
        <position position="222"/>
    </location>
</feature>
<feature type="modified residue" description="Phosphoserine" evidence="9 10 11">
    <location>
        <position position="248"/>
    </location>
</feature>
<feature type="modified residue" description="Phosphoserine" evidence="11">
    <location>
        <position position="278"/>
    </location>
</feature>
<feature type="glycosylation site" description="N-linked (GlcNAc...) asparagine" evidence="1">
    <location>
        <position position="57"/>
    </location>
</feature>
<feature type="glycosylation site" description="N-linked (GlcNAc...) asparagine" evidence="1">
    <location>
        <position position="274"/>
    </location>
</feature>
<feature type="splice variant" id="VSP_033280" description="In isoform 2." evidence="7">
    <location>
        <position position="1"/>
    </location>
</feature>
<feature type="splice variant" id="VSP_033281" description="In isoform 4." evidence="5">
    <original>LASFSPSPPSPY</original>
    <variation>VMTLFSCLVTLF</variation>
    <location>
        <begin position="192"/>
        <end position="203"/>
    </location>
</feature>
<feature type="splice variant" id="VSP_033282" description="In isoform 4." evidence="5">
    <location>
        <begin position="204"/>
        <end position="561"/>
    </location>
</feature>
<feature type="splice variant" id="VSP_033283" description="In isoform 3." evidence="6">
    <location>
        <begin position="375"/>
        <end position="416"/>
    </location>
</feature>
<feature type="sequence variant" id="VAR_042918" description="In dbSNP:rs17857472." evidence="3">
    <original>P</original>
    <variation>R</variation>
    <location>
        <position position="469"/>
    </location>
</feature>
<feature type="sequence variant" id="VAR_042919" description="In dbSNP:rs17854938." evidence="3">
    <original>H</original>
    <variation>R</variation>
    <location>
        <position position="505"/>
    </location>
</feature>
<feature type="sequence conflict" description="In Ref. 1; BAC11168." evidence="7" ref="1">
    <original>S</original>
    <variation>G</variation>
    <location>
        <position position="379"/>
    </location>
</feature>
<feature type="sequence conflict" description="In Ref. 1; BAB55314." evidence="7" ref="1">
    <original>N</original>
    <variation>D</variation>
    <location>
        <position position="395"/>
    </location>
</feature>
<keyword id="KW-0025">Alternative splicing</keyword>
<keyword id="KW-0963">Cytoplasm</keyword>
<keyword id="KW-0325">Glycoprotein</keyword>
<keyword id="KW-0333">Golgi apparatus</keyword>
<keyword id="KW-0472">Membrane</keyword>
<keyword id="KW-0539">Nucleus</keyword>
<keyword id="KW-0597">Phosphoprotein</keyword>
<keyword id="KW-1267">Proteomics identification</keyword>
<keyword id="KW-1185">Reference proteome</keyword>
<keyword id="KW-0812">Transmembrane</keyword>
<keyword id="KW-1133">Transmembrane helix</keyword>
<comment type="function">
    <text evidence="4">Nuclear envelope protein which in association with NUP205, may be involved in nuclear transport of various nuclear proteins in addition to MYC.</text>
</comment>
<comment type="subunit">
    <text evidence="4">Interacts with NUP205.</text>
</comment>
<comment type="subcellular location">
    <subcellularLocation>
        <location evidence="7">Membrane</location>
        <topology evidence="1">Multi-pass membrane protein</topology>
    </subcellularLocation>
    <subcellularLocation>
        <location evidence="4">Nucleus envelope</location>
    </subcellularLocation>
    <subcellularLocation>
        <location evidence="4">Golgi apparatus</location>
    </subcellularLocation>
    <subcellularLocation>
        <location evidence="4">Cytoplasm</location>
    </subcellularLocation>
    <text evidence="4">Weakly expressed in the cytoplasm.</text>
</comment>
<comment type="alternative products">
    <event type="alternative splicing"/>
    <isoform>
        <id>Q96SK2-1</id>
        <name>1</name>
        <sequence type="displayed"/>
    </isoform>
    <isoform>
        <id>Q96SK2-2</id>
        <name>2</name>
        <sequence type="described" ref="VSP_033280"/>
    </isoform>
    <isoform>
        <id>Q96SK2-3</id>
        <name>3</name>
        <sequence type="described" ref="VSP_033283"/>
    </isoform>
    <isoform>
        <id>Q96SK2-4</id>
        <name>4</name>
        <sequence type="described" ref="VSP_033281 VSP_033282"/>
    </isoform>
</comment>
<comment type="tissue specificity">
    <text evidence="4">Expressed in the testis.</text>
</comment>
<gene>
    <name type="primary">TMEM209</name>
</gene>
<sequence>MMQGEAHPSASLIDRTIKMRKETEARKVVLAWGLLNVSMAGMIYTEMTGKLISSYYNVTYWPLWYIELALASLFSLNALFDFWRYFKYTVAPTSLVVSPGQQTLLGLKTAVVQTTPPHDLAATQIPPAPPSPSIQGQSVLSYSPSRSPSTSPKFTTSCMTGYSPQLQGLSSGGSGSYSPGVTYSPVSGYNKLASFSPSPPSPYPTTVGPVESSGLRSRYRSSPTVYNSPTDKEDYMTDLRTLDTFLRSEEEKQHRVKLGSPDSTSPSSSPTFWNYSRSMGDYAQTLKKFQYQLACRSQAPCANKDEADLSSKQAAEEVWARVAMNRQLLDHMDSWTAKFRNWINETILVPLVQEIESVSTQMRRMGCPELQIGEASITSLKQAALVKAPLIPTLNTIVQYLDLTPNQEYLFERIKELSQGGCMSSFRWNRGGDFKGRKWDTDLPTDSAIIMHVFCTYLDSRLPPHPKYPDGKTFTSQHFVQTPNKPDVTNENVFCIYQSAINPPHYELIYQRHVYNLPKGRNNMFHTLLMFLYIIKTKESGMLGRVNLGLSGVNILWIFGE</sequence>
<organism>
    <name type="scientific">Homo sapiens</name>
    <name type="common">Human</name>
    <dbReference type="NCBI Taxonomy" id="9606"/>
    <lineage>
        <taxon>Eukaryota</taxon>
        <taxon>Metazoa</taxon>
        <taxon>Chordata</taxon>
        <taxon>Craniata</taxon>
        <taxon>Vertebrata</taxon>
        <taxon>Euteleostomi</taxon>
        <taxon>Mammalia</taxon>
        <taxon>Eutheria</taxon>
        <taxon>Euarchontoglires</taxon>
        <taxon>Primates</taxon>
        <taxon>Haplorrhini</taxon>
        <taxon>Catarrhini</taxon>
        <taxon>Hominidae</taxon>
        <taxon>Homo</taxon>
    </lineage>
</organism>